<gene>
    <name type="primary">TECRL</name>
    <name type="synonym">SRD5A2L2</name>
</gene>
<comment type="subcellular location">
    <subcellularLocation>
        <location evidence="5">Membrane</location>
        <topology evidence="5">Multi-pass membrane protein</topology>
    </subcellularLocation>
    <subcellularLocation>
        <location evidence="4">Endoplasmic reticulum</location>
    </subcellularLocation>
</comment>
<comment type="tissue specificity">
    <text evidence="4">Predominantly expressed in the heart and skeletal muscle.</text>
</comment>
<comment type="disease" evidence="4">
    <disease id="DI-04918">
        <name>Ventricular tachycardia, catecholaminergic polymorphic, 3</name>
        <acronym>CPVT3</acronym>
        <description>An arrhythmogenic disorder characterized by stress-induced, bidirectional ventricular tachycardia that may degenerate into cardiac arrest and cause sudden death. Patients present with recurrent syncope, or sudden death after physical activity or emotional stress. CPVT3 is an autosomal recessive disorder with onset at early age and associated with sudden death in childhood. Patients manifest QT prolongation on adrenergic stimulation.</description>
        <dbReference type="MIM" id="614021"/>
    </disease>
    <text>The disease is caused by variants affecting the gene represented in this entry.</text>
</comment>
<comment type="similarity">
    <text evidence="5">Belongs to the steroid 5-alpha reductase family.</text>
</comment>
<evidence type="ECO:0000250" key="1">
    <source>
        <dbReference type="UniProtKB" id="Q8BFZ1"/>
    </source>
</evidence>
<evidence type="ECO:0000255" key="2"/>
<evidence type="ECO:0000269" key="3">
    <source>
    </source>
</evidence>
<evidence type="ECO:0000269" key="4">
    <source>
    </source>
</evidence>
<evidence type="ECO:0000305" key="5"/>
<accession>Q5HYJ1</accession>
<proteinExistence type="evidence at protein level"/>
<reference key="1">
    <citation type="journal article" date="2004" name="Nat. Genet.">
        <title>Complete sequencing and characterization of 21,243 full-length human cDNAs.</title>
        <authorList>
            <person name="Ota T."/>
            <person name="Suzuki Y."/>
            <person name="Nishikawa T."/>
            <person name="Otsuki T."/>
            <person name="Sugiyama T."/>
            <person name="Irie R."/>
            <person name="Wakamatsu A."/>
            <person name="Hayashi K."/>
            <person name="Sato H."/>
            <person name="Nagai K."/>
            <person name="Kimura K."/>
            <person name="Makita H."/>
            <person name="Sekine M."/>
            <person name="Obayashi M."/>
            <person name="Nishi T."/>
            <person name="Shibahara T."/>
            <person name="Tanaka T."/>
            <person name="Ishii S."/>
            <person name="Yamamoto J."/>
            <person name="Saito K."/>
            <person name="Kawai Y."/>
            <person name="Isono Y."/>
            <person name="Nakamura Y."/>
            <person name="Nagahari K."/>
            <person name="Murakami K."/>
            <person name="Yasuda T."/>
            <person name="Iwayanagi T."/>
            <person name="Wagatsuma M."/>
            <person name="Shiratori A."/>
            <person name="Sudo H."/>
            <person name="Hosoiri T."/>
            <person name="Kaku Y."/>
            <person name="Kodaira H."/>
            <person name="Kondo H."/>
            <person name="Sugawara M."/>
            <person name="Takahashi M."/>
            <person name="Kanda K."/>
            <person name="Yokoi T."/>
            <person name="Furuya T."/>
            <person name="Kikkawa E."/>
            <person name="Omura Y."/>
            <person name="Abe K."/>
            <person name="Kamihara K."/>
            <person name="Katsuta N."/>
            <person name="Sato K."/>
            <person name="Tanikawa M."/>
            <person name="Yamazaki M."/>
            <person name="Ninomiya K."/>
            <person name="Ishibashi T."/>
            <person name="Yamashita H."/>
            <person name="Murakawa K."/>
            <person name="Fujimori K."/>
            <person name="Tanai H."/>
            <person name="Kimata M."/>
            <person name="Watanabe M."/>
            <person name="Hiraoka S."/>
            <person name="Chiba Y."/>
            <person name="Ishida S."/>
            <person name="Ono Y."/>
            <person name="Takiguchi S."/>
            <person name="Watanabe S."/>
            <person name="Yosida M."/>
            <person name="Hotuta T."/>
            <person name="Kusano J."/>
            <person name="Kanehori K."/>
            <person name="Takahashi-Fujii A."/>
            <person name="Hara H."/>
            <person name="Tanase T.-O."/>
            <person name="Nomura Y."/>
            <person name="Togiya S."/>
            <person name="Komai F."/>
            <person name="Hara R."/>
            <person name="Takeuchi K."/>
            <person name="Arita M."/>
            <person name="Imose N."/>
            <person name="Musashino K."/>
            <person name="Yuuki H."/>
            <person name="Oshima A."/>
            <person name="Sasaki N."/>
            <person name="Aotsuka S."/>
            <person name="Yoshikawa Y."/>
            <person name="Matsunawa H."/>
            <person name="Ichihara T."/>
            <person name="Shiohata N."/>
            <person name="Sano S."/>
            <person name="Moriya S."/>
            <person name="Momiyama H."/>
            <person name="Satoh N."/>
            <person name="Takami S."/>
            <person name="Terashima Y."/>
            <person name="Suzuki O."/>
            <person name="Nakagawa S."/>
            <person name="Senoh A."/>
            <person name="Mizoguchi H."/>
            <person name="Goto Y."/>
            <person name="Shimizu F."/>
            <person name="Wakebe H."/>
            <person name="Hishigaki H."/>
            <person name="Watanabe T."/>
            <person name="Sugiyama A."/>
            <person name="Takemoto M."/>
            <person name="Kawakami B."/>
            <person name="Yamazaki M."/>
            <person name="Watanabe K."/>
            <person name="Kumagai A."/>
            <person name="Itakura S."/>
            <person name="Fukuzumi Y."/>
            <person name="Fujimori Y."/>
            <person name="Komiyama M."/>
            <person name="Tashiro H."/>
            <person name="Tanigami A."/>
            <person name="Fujiwara T."/>
            <person name="Ono T."/>
            <person name="Yamada K."/>
            <person name="Fujii Y."/>
            <person name="Ozaki K."/>
            <person name="Hirao M."/>
            <person name="Ohmori Y."/>
            <person name="Kawabata A."/>
            <person name="Hikiji T."/>
            <person name="Kobatake N."/>
            <person name="Inagaki H."/>
            <person name="Ikema Y."/>
            <person name="Okamoto S."/>
            <person name="Okitani R."/>
            <person name="Kawakami T."/>
            <person name="Noguchi S."/>
            <person name="Itoh T."/>
            <person name="Shigeta K."/>
            <person name="Senba T."/>
            <person name="Matsumura K."/>
            <person name="Nakajima Y."/>
            <person name="Mizuno T."/>
            <person name="Morinaga M."/>
            <person name="Sasaki M."/>
            <person name="Togashi T."/>
            <person name="Oyama M."/>
            <person name="Hata H."/>
            <person name="Watanabe M."/>
            <person name="Komatsu T."/>
            <person name="Mizushima-Sugano J."/>
            <person name="Satoh T."/>
            <person name="Shirai Y."/>
            <person name="Takahashi Y."/>
            <person name="Nakagawa K."/>
            <person name="Okumura K."/>
            <person name="Nagase T."/>
            <person name="Nomura N."/>
            <person name="Kikuchi H."/>
            <person name="Masuho Y."/>
            <person name="Yamashita R."/>
            <person name="Nakai K."/>
            <person name="Yada T."/>
            <person name="Nakamura Y."/>
            <person name="Ohara O."/>
            <person name="Isogai T."/>
            <person name="Sugano S."/>
        </authorList>
    </citation>
    <scope>NUCLEOTIDE SEQUENCE [LARGE SCALE MRNA]</scope>
    <source>
        <tissue>Heart</tissue>
    </source>
</reference>
<reference key="2">
    <citation type="journal article" date="2007" name="BMC Genomics">
        <title>The full-ORF clone resource of the German cDNA consortium.</title>
        <authorList>
            <person name="Bechtel S."/>
            <person name="Rosenfelder H."/>
            <person name="Duda A."/>
            <person name="Schmidt C.P."/>
            <person name="Ernst U."/>
            <person name="Wellenreuther R."/>
            <person name="Mehrle A."/>
            <person name="Schuster C."/>
            <person name="Bahr A."/>
            <person name="Bloecker H."/>
            <person name="Heubner D."/>
            <person name="Hoerlein A."/>
            <person name="Michel G."/>
            <person name="Wedler H."/>
            <person name="Koehrer K."/>
            <person name="Ottenwaelder B."/>
            <person name="Poustka A."/>
            <person name="Wiemann S."/>
            <person name="Schupp I."/>
        </authorList>
    </citation>
    <scope>NUCLEOTIDE SEQUENCE [LARGE SCALE MRNA]</scope>
    <source>
        <tissue>Heart</tissue>
    </source>
</reference>
<reference key="3">
    <citation type="journal article" date="2016" name="EMBO Mol. Med.">
        <title>TECRL, a new life-threatening inherited arrhythmia gene associated with overlapping clinical features of both LQTS and CPVT.</title>
        <authorList>
            <person name="Devalla H.D."/>
            <person name="Gelinas R."/>
            <person name="Aburawi E.H."/>
            <person name="Beqqali A."/>
            <person name="Goyette P."/>
            <person name="Freund C."/>
            <person name="Chaix M.A."/>
            <person name="Tadros R."/>
            <person name="Jiang H."/>
            <person name="Le Bechec A."/>
            <person name="Monshouwer-Kloots J.J."/>
            <person name="Zwetsloot T."/>
            <person name="Kosmidis G."/>
            <person name="Latour F."/>
            <person name="Alikashani A."/>
            <person name="Hoekstra M."/>
            <person name="Schlaepfer J."/>
            <person name="Mummery C.L."/>
            <person name="Stevenson B."/>
            <person name="Kutalik Z."/>
            <person name="de Vries A.A."/>
            <person name="Rivard L."/>
            <person name="Wilde A.A."/>
            <person name="Talajic M."/>
            <person name="Verkerk A.O."/>
            <person name="Al-Gazali L."/>
            <person name="Rioux J.D."/>
            <person name="Bhuiyan Z.A."/>
            <person name="Passier R."/>
        </authorList>
    </citation>
    <scope>TISSUE SPECIFICITY</scope>
    <scope>SUBCELLULAR LOCATION</scope>
    <scope>INVOLVEMENT IN CPVT3</scope>
    <scope>VARIANT CPVT3 GLN-196</scope>
</reference>
<reference key="4">
    <citation type="journal article" date="2015" name="Proc. Natl. Acad. Sci. U.S.A.">
        <title>Neomorphic effects of recurrent somatic mutations in Yin Yang 1 in insulin-producing adenomas.</title>
        <authorList>
            <person name="Cromer M.K."/>
            <person name="Choi M."/>
            <person name="Nelson-Williams C."/>
            <person name="Fonseca A.L."/>
            <person name="Kunstman J.W."/>
            <person name="Korah R.M."/>
            <person name="Overton J.D."/>
            <person name="Mane S."/>
            <person name="Kenney B."/>
            <person name="Malchoff C.D."/>
            <person name="Stalberg P."/>
            <person name="Akerstroem G."/>
            <person name="Westin G."/>
            <person name="Hellman P."/>
            <person name="Carling T."/>
            <person name="Bjoerklund P."/>
            <person name="Lifton R.P."/>
        </authorList>
    </citation>
    <scope>VARIANT HIS-169</scope>
</reference>
<feature type="chain" id="PRO_0000317713" description="Trans-2,3-enoyl-CoA reductase-like">
    <location>
        <begin position="1"/>
        <end position="363"/>
    </location>
</feature>
<feature type="transmembrane region" description="Helical" evidence="2">
    <location>
        <begin position="143"/>
        <end position="163"/>
    </location>
</feature>
<feature type="transmembrane region" description="Helical" evidence="2">
    <location>
        <begin position="217"/>
        <end position="237"/>
    </location>
</feature>
<feature type="transmembrane region" description="Helical" evidence="2">
    <location>
        <begin position="311"/>
        <end position="331"/>
    </location>
</feature>
<feature type="modified residue" description="Phosphoserine" evidence="1">
    <location>
        <position position="37"/>
    </location>
</feature>
<feature type="sequence variant" id="VAR_074183" evidence="3">
    <original>Y</original>
    <variation>H</variation>
    <location>
        <position position="169"/>
    </location>
</feature>
<feature type="sequence variant" id="VAR_078556" description="In CPVT3; uncertain significance; dbSNP:rs773204795." evidence="4">
    <original>R</original>
    <variation>Q</variation>
    <location>
        <position position="196"/>
    </location>
</feature>
<organism>
    <name type="scientific">Homo sapiens</name>
    <name type="common">Human</name>
    <dbReference type="NCBI Taxonomy" id="9606"/>
    <lineage>
        <taxon>Eukaryota</taxon>
        <taxon>Metazoa</taxon>
        <taxon>Chordata</taxon>
        <taxon>Craniata</taxon>
        <taxon>Vertebrata</taxon>
        <taxon>Euteleostomi</taxon>
        <taxon>Mammalia</taxon>
        <taxon>Eutheria</taxon>
        <taxon>Euarchontoglires</taxon>
        <taxon>Primates</taxon>
        <taxon>Haplorrhini</taxon>
        <taxon>Catarrhini</taxon>
        <taxon>Hominidae</taxon>
        <taxon>Homo</taxon>
    </lineage>
</organism>
<keyword id="KW-0225">Disease variant</keyword>
<keyword id="KW-0256">Endoplasmic reticulum</keyword>
<keyword id="KW-0472">Membrane</keyword>
<keyword id="KW-0560">Oxidoreductase</keyword>
<keyword id="KW-0597">Phosphoprotein</keyword>
<keyword id="KW-1267">Proteomics identification</keyword>
<keyword id="KW-1185">Reference proteome</keyword>
<keyword id="KW-0812">Transmembrane</keyword>
<keyword id="KW-1133">Transmembrane helix</keyword>
<sequence length="363" mass="42009">MFKRHKSLASERKRALLSQRATRFILKDDMRNFHFLSKLVLSAGPLRPTPAVKHSKTTHFEIEIFDAQTRKQICILDKVTQSSTIHDVKQKFHKACPKWYPSRVGLQLECGGPFLKDYITIQSIAASSIVTLYATDLGQQVSWTTVFLAEYTGPLLIYLLFYLRIPCIYDGKESARRLRHPVVHLACFCHCIHYIRYLLETLFVHKVSAGHTPLKNLIMSCAFYWGFTSWIAYYINHPLYTPPSFGNRQITVSAINFLICEAGNHFINVMLSHPNHTGNNACFPSPNYNPFTWMFFLVSCPNYTYEIGSWISFTVMTQTLPVGIFTLLMSIQMSLWAQKKHKIYLRKFNSYIHRKSAMIPFIL</sequence>
<protein>
    <recommendedName>
        <fullName>Trans-2,3-enoyl-CoA reductase-like</fullName>
        <ecNumber>1.3.1.-</ecNumber>
    </recommendedName>
    <alternativeName>
        <fullName>Steroid 5-alpha-reductase 2-like 2 protein</fullName>
    </alternativeName>
</protein>
<dbReference type="EC" id="1.3.1.-"/>
<dbReference type="EMBL" id="AK290606">
    <property type="protein sequence ID" value="BAF83295.1"/>
    <property type="molecule type" value="mRNA"/>
</dbReference>
<dbReference type="EMBL" id="BX647590">
    <property type="protein sequence ID" value="CAI46063.1"/>
    <property type="molecule type" value="mRNA"/>
</dbReference>
<dbReference type="EMBL" id="AL833108">
    <property type="protein sequence ID" value="CAI46109.1"/>
    <property type="molecule type" value="mRNA"/>
</dbReference>
<dbReference type="CCDS" id="CCDS33990.1"/>
<dbReference type="RefSeq" id="NP_001010874.2">
    <property type="nucleotide sequence ID" value="NM_001010874.4"/>
</dbReference>
<dbReference type="SMR" id="Q5HYJ1"/>
<dbReference type="BioGRID" id="128951">
    <property type="interactions" value="2"/>
</dbReference>
<dbReference type="FunCoup" id="Q5HYJ1">
    <property type="interactions" value="68"/>
</dbReference>
<dbReference type="STRING" id="9606.ENSP00000370607"/>
<dbReference type="GlyGen" id="Q5HYJ1">
    <property type="glycosylation" value="1 site"/>
</dbReference>
<dbReference type="iPTMnet" id="Q5HYJ1"/>
<dbReference type="PhosphoSitePlus" id="Q5HYJ1"/>
<dbReference type="BioMuta" id="TECRL"/>
<dbReference type="DMDM" id="74707936"/>
<dbReference type="MassIVE" id="Q5HYJ1"/>
<dbReference type="PaxDb" id="9606-ENSP00000370607"/>
<dbReference type="PeptideAtlas" id="Q5HYJ1"/>
<dbReference type="ProteomicsDB" id="62939"/>
<dbReference type="Antibodypedia" id="68497">
    <property type="antibodies" value="77 antibodies from 11 providers"/>
</dbReference>
<dbReference type="DNASU" id="253017"/>
<dbReference type="Ensembl" id="ENST00000381210.8">
    <property type="protein sequence ID" value="ENSP00000370607.3"/>
    <property type="gene ID" value="ENSG00000205678.8"/>
</dbReference>
<dbReference type="GeneID" id="253017"/>
<dbReference type="KEGG" id="hsa:253017"/>
<dbReference type="MANE-Select" id="ENST00000381210.8">
    <property type="protein sequence ID" value="ENSP00000370607.3"/>
    <property type="RefSeq nucleotide sequence ID" value="NM_001010874.5"/>
    <property type="RefSeq protein sequence ID" value="NP_001010874.2"/>
</dbReference>
<dbReference type="UCSC" id="uc003hcv.4">
    <property type="organism name" value="human"/>
</dbReference>
<dbReference type="AGR" id="HGNC:27365"/>
<dbReference type="CTD" id="253017"/>
<dbReference type="DisGeNET" id="253017"/>
<dbReference type="GeneCards" id="TECRL"/>
<dbReference type="GeneReviews" id="TECRL"/>
<dbReference type="HGNC" id="HGNC:27365">
    <property type="gene designation" value="TECRL"/>
</dbReference>
<dbReference type="HPA" id="ENSG00000205678">
    <property type="expression patterns" value="Tissue enriched (heart)"/>
</dbReference>
<dbReference type="MalaCards" id="TECRL"/>
<dbReference type="MIM" id="614021">
    <property type="type" value="phenotype"/>
</dbReference>
<dbReference type="MIM" id="617242">
    <property type="type" value="gene"/>
</dbReference>
<dbReference type="neXtProt" id="NX_Q5HYJ1"/>
<dbReference type="OpenTargets" id="ENSG00000205678"/>
<dbReference type="Orphanet" id="3286">
    <property type="disease" value="Catecholaminergic polymorphic ventricular tachycardia"/>
</dbReference>
<dbReference type="PharmGKB" id="PA165664664"/>
<dbReference type="VEuPathDB" id="HostDB:ENSG00000205678"/>
<dbReference type="eggNOG" id="KOG1639">
    <property type="taxonomic scope" value="Eukaryota"/>
</dbReference>
<dbReference type="GeneTree" id="ENSGT00950000182886"/>
<dbReference type="HOGENOM" id="CLU_059260_1_0_1"/>
<dbReference type="InParanoid" id="Q5HYJ1"/>
<dbReference type="OMA" id="RQVSWTT"/>
<dbReference type="OrthoDB" id="540503at2759"/>
<dbReference type="PAN-GO" id="Q5HYJ1">
    <property type="GO annotations" value="2 GO annotations based on evolutionary models"/>
</dbReference>
<dbReference type="PhylomeDB" id="Q5HYJ1"/>
<dbReference type="TreeFam" id="TF300908"/>
<dbReference type="PathwayCommons" id="Q5HYJ1"/>
<dbReference type="Reactome" id="R-HSA-75876">
    <property type="pathway name" value="Synthesis of very long-chain fatty acyl-CoAs"/>
</dbReference>
<dbReference type="SignaLink" id="Q5HYJ1"/>
<dbReference type="BioGRID-ORCS" id="253017">
    <property type="hits" value="12 hits in 1147 CRISPR screens"/>
</dbReference>
<dbReference type="ChiTaRS" id="TECRL">
    <property type="organism name" value="human"/>
</dbReference>
<dbReference type="GenomeRNAi" id="253017"/>
<dbReference type="Pharos" id="Q5HYJ1">
    <property type="development level" value="Tbio"/>
</dbReference>
<dbReference type="PRO" id="PR:Q5HYJ1"/>
<dbReference type="Proteomes" id="UP000005640">
    <property type="component" value="Chromosome 4"/>
</dbReference>
<dbReference type="RNAct" id="Q5HYJ1">
    <property type="molecule type" value="protein"/>
</dbReference>
<dbReference type="Bgee" id="ENSG00000205678">
    <property type="expression patterns" value="Expressed in myocardium and 104 other cell types or tissues"/>
</dbReference>
<dbReference type="ExpressionAtlas" id="Q5HYJ1">
    <property type="expression patterns" value="baseline and differential"/>
</dbReference>
<dbReference type="GO" id="GO:0005783">
    <property type="term" value="C:endoplasmic reticulum"/>
    <property type="evidence" value="ECO:0000314"/>
    <property type="project" value="UniProtKB"/>
</dbReference>
<dbReference type="GO" id="GO:0016020">
    <property type="term" value="C:membrane"/>
    <property type="evidence" value="ECO:0007669"/>
    <property type="project" value="UniProtKB-SubCell"/>
</dbReference>
<dbReference type="GO" id="GO:0016491">
    <property type="term" value="F:oxidoreductase activity"/>
    <property type="evidence" value="ECO:0000318"/>
    <property type="project" value="GO_Central"/>
</dbReference>
<dbReference type="GO" id="GO:0016627">
    <property type="term" value="F:oxidoreductase activity, acting on the CH-CH group of donors"/>
    <property type="evidence" value="ECO:0007669"/>
    <property type="project" value="InterPro"/>
</dbReference>
<dbReference type="GO" id="GO:0042761">
    <property type="term" value="P:very long-chain fatty acid biosynthetic process"/>
    <property type="evidence" value="ECO:0000318"/>
    <property type="project" value="GO_Central"/>
</dbReference>
<dbReference type="CDD" id="cd17125">
    <property type="entry name" value="Ubl_TECRL"/>
    <property type="match status" value="1"/>
</dbReference>
<dbReference type="FunFam" id="3.10.20.90:FF:000131">
    <property type="entry name" value="trans-2,3-enoyl-CoA reductase-like"/>
    <property type="match status" value="1"/>
</dbReference>
<dbReference type="Gene3D" id="3.10.20.90">
    <property type="entry name" value="Phosphatidylinositol 3-kinase Catalytic Subunit, Chain A, domain 1"/>
    <property type="match status" value="1"/>
</dbReference>
<dbReference type="InterPro" id="IPR001104">
    <property type="entry name" value="3-oxo-5_a-steroid_4-DH_C"/>
</dbReference>
<dbReference type="InterPro" id="IPR039357">
    <property type="entry name" value="SRD5A/TECR"/>
</dbReference>
<dbReference type="InterPro" id="IPR049127">
    <property type="entry name" value="TECR-like_N"/>
</dbReference>
<dbReference type="InterPro" id="IPR047822">
    <property type="entry name" value="TECRL_Ubl"/>
</dbReference>
<dbReference type="PANTHER" id="PTHR10556">
    <property type="entry name" value="3-OXO-5-ALPHA-STEROID 4-DEHYDROGENASE"/>
    <property type="match status" value="1"/>
</dbReference>
<dbReference type="PANTHER" id="PTHR10556:SF27">
    <property type="entry name" value="TRANS-2,3-ENOYL-COA REDUCTASE-LIKE"/>
    <property type="match status" value="1"/>
</dbReference>
<dbReference type="Pfam" id="PF02544">
    <property type="entry name" value="Steroid_dh"/>
    <property type="match status" value="1"/>
</dbReference>
<dbReference type="Pfam" id="PF21696">
    <property type="entry name" value="TECR_N"/>
    <property type="match status" value="1"/>
</dbReference>
<dbReference type="PROSITE" id="PS50244">
    <property type="entry name" value="S5A_REDUCTASE"/>
    <property type="match status" value="1"/>
</dbReference>
<name>TECRL_HUMAN</name>